<comment type="function">
    <text evidence="5">Atypical histone H2A which can replace conventional H2A in some nucleosomes and may play a role during spermatogenesis. Nucleosomes wrap and compact DNA into chromatin, limiting DNA accessibility to the cellular machineries which require DNA as a template. Histones thereby play a central role in transcription regulation, DNA repair, DNA replication and chromosomal stability. DNA accessibility is regulated via a complex set of post-translational modifications of histones, also called histone code, and nucleosome remodeling.</text>
</comment>
<comment type="subunit">
    <text evidence="1">The nucleosome is a histone octamer containing two molecules each of H2A, H2B, H3 and H4 assembled in one H3-H4 heterotetramer and two H2A-H2B heterodimers. May be incorporated into a proportion of nucleosomes, replacing one or more H2A molecules. Interacts with H2BC1/TH2B; preferentially dimerizes with H2BC1/TH2B to form nucleosomes (PubMed:17261847).</text>
</comment>
<comment type="subcellular location">
    <subcellularLocation>
        <location evidence="1">Nucleus</location>
    </subcellularLocation>
    <subcellularLocation>
        <location evidence="1">Chromosome</location>
    </subcellularLocation>
    <text evidence="1">Specifically localizes to the pericentric regions in condensing spermatids (PubMed:17261847).</text>
</comment>
<comment type="tissue specificity">
    <text evidence="1">Testis-specific.</text>
</comment>
<comment type="developmental stage">
    <text evidence="1 2">Strongly enriched in step 12-16 spermatids and accumulate during late spermiogenesis, in condensing spermatids (PubMed:17261847). Remains present in mature spermatozoa isolated from epididymis (PubMed:17261847). Rapidly disappears from the paternal pericentric heterochromatin regions after sperm-egg fusion (PubMed:18703863).</text>
</comment>
<comment type="miscellaneous">
    <text evidence="4">In contrast to other H2A histones, it does not contain the conserved residues that are the target of post-translational modifications.</text>
</comment>
<comment type="similarity">
    <text evidence="4">Belongs to the histone H2A family.</text>
</comment>
<proteinExistence type="evidence at transcript level"/>
<name>H2AL1_MOUSE</name>
<accession>Q5M8Q2</accession>
<keyword id="KW-0158">Chromosome</keyword>
<keyword id="KW-0221">Differentiation</keyword>
<keyword id="KW-0238">DNA-binding</keyword>
<keyword id="KW-0544">Nucleosome core</keyword>
<keyword id="KW-0539">Nucleus</keyword>
<keyword id="KW-1185">Reference proteome</keyword>
<keyword id="KW-0744">Spermatogenesis</keyword>
<evidence type="ECO:0000269" key="1">
    <source>
    </source>
</evidence>
<evidence type="ECO:0000269" key="2">
    <source>
    </source>
</evidence>
<evidence type="ECO:0000303" key="3">
    <source>
    </source>
</evidence>
<evidence type="ECO:0000305" key="4"/>
<evidence type="ECO:0000305" key="5">
    <source>
    </source>
</evidence>
<evidence type="ECO:0000312" key="6">
    <source>
        <dbReference type="MGI" id="MGI:3649874"/>
    </source>
</evidence>
<evidence type="ECO:0000312" key="7">
    <source>
        <dbReference type="MGI" id="MGI:3710416"/>
    </source>
</evidence>
<evidence type="ECO:0000312" key="8">
    <source>
        <dbReference type="MGI" id="MGI:3710419"/>
    </source>
</evidence>
<evidence type="ECO:0000312" key="9">
    <source>
        <dbReference type="MGI" id="MGI:3710577"/>
    </source>
</evidence>
<evidence type="ECO:0000312" key="10">
    <source>
        <dbReference type="MGI" id="MGI:3711280"/>
    </source>
</evidence>
<evidence type="ECO:0000312" key="11">
    <source>
        <dbReference type="MGI" id="MGI:3711282"/>
    </source>
</evidence>
<evidence type="ECO:0000312" key="12">
    <source>
        <dbReference type="MGI" id="MGI:3714114"/>
    </source>
</evidence>
<dbReference type="EMBL" id="BX294183">
    <property type="status" value="NOT_ANNOTATED_CDS"/>
    <property type="molecule type" value="Genomic_DNA"/>
</dbReference>
<dbReference type="EMBL" id="CH466584">
    <property type="protein sequence ID" value="EDL35683.1"/>
    <property type="molecule type" value="Genomic_DNA"/>
</dbReference>
<dbReference type="EMBL" id="BC087913">
    <property type="protein sequence ID" value="AAH87913.1"/>
    <property type="molecule type" value="mRNA"/>
</dbReference>
<dbReference type="CCDS" id="CCDS53003.1"/>
<dbReference type="RefSeq" id="NP_001104507.1">
    <property type="nucleotide sequence ID" value="NM_001111037.1"/>
</dbReference>
<dbReference type="RefSeq" id="NP_001229878.1">
    <property type="nucleotide sequence ID" value="NM_001242949.1"/>
</dbReference>
<dbReference type="RefSeq" id="NP_001229879.1">
    <property type="nucleotide sequence ID" value="NM_001242950.1"/>
</dbReference>
<dbReference type="RefSeq" id="NP_001229880.1">
    <property type="nucleotide sequence ID" value="NM_001242951.1"/>
</dbReference>
<dbReference type="RefSeq" id="NP_001229881.1">
    <property type="nucleotide sequence ID" value="NM_001242952.1"/>
</dbReference>
<dbReference type="RefSeq" id="NP_001229882.1">
    <property type="nucleotide sequence ID" value="NM_001242953.1"/>
</dbReference>
<dbReference type="RefSeq" id="NP_001229883.1">
    <property type="nucleotide sequence ID" value="NM_001242954.1"/>
</dbReference>
<dbReference type="SMR" id="Q5M8Q2"/>
<dbReference type="FunCoup" id="Q5M8Q2">
    <property type="interactions" value="51"/>
</dbReference>
<dbReference type="STRING" id="10090.ENSMUSP00000125841"/>
<dbReference type="PaxDb" id="10090-ENSMUSP00000125841"/>
<dbReference type="ProteomicsDB" id="271379"/>
<dbReference type="DNASU" id="100042922"/>
<dbReference type="Ensembl" id="ENSMUST00000164729.3">
    <property type="protein sequence ID" value="ENSMUSP00000125841.3"/>
    <property type="gene ID" value="ENSMUSG00000095445.2"/>
</dbReference>
<dbReference type="Ensembl" id="ENSMUST00000177926.3">
    <property type="protein sequence ID" value="ENSMUSP00000136794.3"/>
    <property type="gene ID" value="ENSMUSG00000099443.2"/>
</dbReference>
<dbReference type="Ensembl" id="ENSMUST00000178595.2">
    <property type="protein sequence ID" value="ENSMUSP00000137030.2"/>
    <property type="gene ID" value="ENSMUSG00000094904.2"/>
</dbReference>
<dbReference type="Ensembl" id="ENSMUST00000178806.2">
    <property type="protein sequence ID" value="ENSMUSP00000135929.2"/>
    <property type="gene ID" value="ENSMUSG00000096097.2"/>
</dbReference>
<dbReference type="Ensembl" id="ENSMUST00000179004.2">
    <property type="protein sequence ID" value="ENSMUSP00000136695.2"/>
    <property type="gene ID" value="ENSMUSG00000095655.2"/>
</dbReference>
<dbReference type="Ensembl" id="ENSMUST00000179859.2">
    <property type="protein sequence ID" value="ENSMUSP00000137575.2"/>
    <property type="gene ID" value="ENSMUSG00000095662.2"/>
</dbReference>
<dbReference type="Ensembl" id="ENSMUST00000188439.2">
    <property type="protein sequence ID" value="ENSMUSP00000140925.2"/>
    <property type="gene ID" value="ENSMUSG00000100626.2"/>
</dbReference>
<dbReference type="GeneID" id="100042922"/>
<dbReference type="GeneID" id="100042929"/>
<dbReference type="GeneID" id="100042931"/>
<dbReference type="GeneID" id="100042939"/>
<dbReference type="GeneID" id="100042943"/>
<dbReference type="GeneID" id="100042944"/>
<dbReference type="GeneID" id="100042946"/>
<dbReference type="KEGG" id="mmu:100042922"/>
<dbReference type="KEGG" id="mmu:100042929"/>
<dbReference type="KEGG" id="mmu:100042931"/>
<dbReference type="KEGG" id="mmu:100042939"/>
<dbReference type="KEGG" id="mmu:100042943"/>
<dbReference type="KEGG" id="mmu:100042944"/>
<dbReference type="KEGG" id="mmu:100042946"/>
<dbReference type="UCSC" id="uc029xib.1">
    <property type="organism name" value="mouse"/>
</dbReference>
<dbReference type="AGR" id="MGI:3649874"/>
<dbReference type="AGR" id="MGI:3710416"/>
<dbReference type="AGR" id="MGI:3710419"/>
<dbReference type="AGR" id="MGI:3710577"/>
<dbReference type="AGR" id="MGI:3711280"/>
<dbReference type="AGR" id="MGI:3711282"/>
<dbReference type="AGR" id="MGI:3714114"/>
<dbReference type="CTD" id="100042922"/>
<dbReference type="CTD" id="100042929"/>
<dbReference type="CTD" id="100042931"/>
<dbReference type="CTD" id="100042939"/>
<dbReference type="CTD" id="100042943"/>
<dbReference type="CTD" id="100042944"/>
<dbReference type="CTD" id="100042946"/>
<dbReference type="MGI" id="MGI:3714114">
    <property type="gene designation" value="H2al1a"/>
</dbReference>
<dbReference type="MGI" id="MGI:3711280">
    <property type="gene designation" value="H2al1c"/>
</dbReference>
<dbReference type="MGI" id="MGI:3710419">
    <property type="gene designation" value="H2al1d"/>
</dbReference>
<dbReference type="MGI" id="MGI:3649874">
    <property type="gene designation" value="H2al1f"/>
</dbReference>
<dbReference type="MGI" id="MGI:3710577">
    <property type="gene designation" value="H2al1g"/>
</dbReference>
<dbReference type="MGI" id="MGI:3711282">
    <property type="gene designation" value="H2al1h"/>
</dbReference>
<dbReference type="MGI" id="MGI:3710416">
    <property type="gene designation" value="H2al1i"/>
</dbReference>
<dbReference type="VEuPathDB" id="HostDB:ENSMUSG00000094904"/>
<dbReference type="VEuPathDB" id="HostDB:ENSMUSG00000095445"/>
<dbReference type="VEuPathDB" id="HostDB:ENSMUSG00000095655"/>
<dbReference type="VEuPathDB" id="HostDB:ENSMUSG00000095662"/>
<dbReference type="VEuPathDB" id="HostDB:ENSMUSG00000096097"/>
<dbReference type="VEuPathDB" id="HostDB:ENSMUSG00000099443"/>
<dbReference type="VEuPathDB" id="HostDB:ENSMUSG00000100626"/>
<dbReference type="eggNOG" id="KOG1756">
    <property type="taxonomic scope" value="Eukaryota"/>
</dbReference>
<dbReference type="GeneTree" id="ENSGT00940000162492"/>
<dbReference type="HOGENOM" id="CLU_062828_3_2_1"/>
<dbReference type="InParanoid" id="Q5M8Q2"/>
<dbReference type="OrthoDB" id="9421954at2759"/>
<dbReference type="PhylomeDB" id="Q5M8Q2"/>
<dbReference type="TreeFam" id="TF300137"/>
<dbReference type="BioGRID-ORCS" id="100042922">
    <property type="hits" value="0 hits in 5 CRISPR screens"/>
</dbReference>
<dbReference type="BioGRID-ORCS" id="100042929">
    <property type="hits" value="0 hits in 7 CRISPR screens"/>
</dbReference>
<dbReference type="BioGRID-ORCS" id="100042931">
    <property type="hits" value="0 hits in 7 CRISPR screens"/>
</dbReference>
<dbReference type="BioGRID-ORCS" id="100042939">
    <property type="hits" value="0 hits in 24 CRISPR screens"/>
</dbReference>
<dbReference type="BioGRID-ORCS" id="100042943">
    <property type="hits" value="0 hits in 7 CRISPR screens"/>
</dbReference>
<dbReference type="BioGRID-ORCS" id="100042944">
    <property type="hits" value="0 hits in 5 CRISPR screens"/>
</dbReference>
<dbReference type="BioGRID-ORCS" id="100042946">
    <property type="hits" value="0 hits in 8 CRISPR screens"/>
</dbReference>
<dbReference type="ChiTaRS" id="H2al1g">
    <property type="organism name" value="mouse"/>
</dbReference>
<dbReference type="PRO" id="PR:Q5M8Q2"/>
<dbReference type="Proteomes" id="UP000000589">
    <property type="component" value="Chromosome X"/>
</dbReference>
<dbReference type="RNAct" id="Q5M8Q2">
    <property type="molecule type" value="protein"/>
</dbReference>
<dbReference type="Bgee" id="ENSMUSG00000094904">
    <property type="expression patterns" value="Expressed in spermatid and 6 other cell types or tissues"/>
</dbReference>
<dbReference type="GO" id="GO:0000786">
    <property type="term" value="C:nucleosome"/>
    <property type="evidence" value="ECO:0007669"/>
    <property type="project" value="UniProtKB-KW"/>
</dbReference>
<dbReference type="GO" id="GO:0005634">
    <property type="term" value="C:nucleus"/>
    <property type="evidence" value="ECO:0000314"/>
    <property type="project" value="MGI"/>
</dbReference>
<dbReference type="GO" id="GO:0005721">
    <property type="term" value="C:pericentric heterochromatin"/>
    <property type="evidence" value="ECO:0000314"/>
    <property type="project" value="MGI"/>
</dbReference>
<dbReference type="GO" id="GO:0003677">
    <property type="term" value="F:DNA binding"/>
    <property type="evidence" value="ECO:0007669"/>
    <property type="project" value="UniProtKB-KW"/>
</dbReference>
<dbReference type="GO" id="GO:0046982">
    <property type="term" value="F:protein heterodimerization activity"/>
    <property type="evidence" value="ECO:0007669"/>
    <property type="project" value="InterPro"/>
</dbReference>
<dbReference type="GO" id="GO:0030527">
    <property type="term" value="F:structural constituent of chromatin"/>
    <property type="evidence" value="ECO:0007669"/>
    <property type="project" value="InterPro"/>
</dbReference>
<dbReference type="GO" id="GO:0030154">
    <property type="term" value="P:cell differentiation"/>
    <property type="evidence" value="ECO:0007669"/>
    <property type="project" value="UniProtKB-KW"/>
</dbReference>
<dbReference type="GO" id="GO:0051276">
    <property type="term" value="P:chromosome organization"/>
    <property type="evidence" value="ECO:0000314"/>
    <property type="project" value="MGI"/>
</dbReference>
<dbReference type="GO" id="GO:0007283">
    <property type="term" value="P:spermatogenesis"/>
    <property type="evidence" value="ECO:0007669"/>
    <property type="project" value="UniProtKB-KW"/>
</dbReference>
<dbReference type="FunFam" id="1.10.20.10:FF:000095">
    <property type="entry name" value="Histone H2A"/>
    <property type="match status" value="1"/>
</dbReference>
<dbReference type="Gene3D" id="1.10.20.10">
    <property type="entry name" value="Histone, subunit A"/>
    <property type="match status" value="1"/>
</dbReference>
<dbReference type="InterPro" id="IPR009072">
    <property type="entry name" value="Histone-fold"/>
</dbReference>
<dbReference type="InterPro" id="IPR002119">
    <property type="entry name" value="Histone_H2A"/>
</dbReference>
<dbReference type="InterPro" id="IPR007125">
    <property type="entry name" value="Histone_H2A/H2B/H3"/>
</dbReference>
<dbReference type="PANTHER" id="PTHR23430">
    <property type="entry name" value="HISTONE H2A"/>
    <property type="match status" value="1"/>
</dbReference>
<dbReference type="Pfam" id="PF00125">
    <property type="entry name" value="Histone"/>
    <property type="match status" value="1"/>
</dbReference>
<dbReference type="PRINTS" id="PR00620">
    <property type="entry name" value="HISTONEH2A"/>
</dbReference>
<dbReference type="SMART" id="SM00414">
    <property type="entry name" value="H2A"/>
    <property type="match status" value="1"/>
</dbReference>
<dbReference type="SUPFAM" id="SSF47113">
    <property type="entry name" value="Histone-fold"/>
    <property type="match status" value="1"/>
</dbReference>
<reference key="1">
    <citation type="journal article" date="2009" name="PLoS Biol.">
        <title>Lineage-specific biology revealed by a finished genome assembly of the mouse.</title>
        <authorList>
            <person name="Church D.M."/>
            <person name="Goodstadt L."/>
            <person name="Hillier L.W."/>
            <person name="Zody M.C."/>
            <person name="Goldstein S."/>
            <person name="She X."/>
            <person name="Bult C.J."/>
            <person name="Agarwala R."/>
            <person name="Cherry J.L."/>
            <person name="DiCuccio M."/>
            <person name="Hlavina W."/>
            <person name="Kapustin Y."/>
            <person name="Meric P."/>
            <person name="Maglott D."/>
            <person name="Birtle Z."/>
            <person name="Marques A.C."/>
            <person name="Graves T."/>
            <person name="Zhou S."/>
            <person name="Teague B."/>
            <person name="Potamousis K."/>
            <person name="Churas C."/>
            <person name="Place M."/>
            <person name="Herschleb J."/>
            <person name="Runnheim R."/>
            <person name="Forrest D."/>
            <person name="Amos-Landgraf J."/>
            <person name="Schwartz D.C."/>
            <person name="Cheng Z."/>
            <person name="Lindblad-Toh K."/>
            <person name="Eichler E.E."/>
            <person name="Ponting C.P."/>
        </authorList>
    </citation>
    <scope>NUCLEOTIDE SEQUENCE [LARGE SCALE GENOMIC DNA]</scope>
    <source>
        <strain>C57BL/6J</strain>
    </source>
</reference>
<reference key="2">
    <citation type="submission" date="2005-07" db="EMBL/GenBank/DDBJ databases">
        <authorList>
            <person name="Mural R.J."/>
            <person name="Adams M.D."/>
            <person name="Myers E.W."/>
            <person name="Smith H.O."/>
            <person name="Venter J.C."/>
        </authorList>
    </citation>
    <scope>NUCLEOTIDE SEQUENCE [LARGE SCALE GENOMIC DNA]</scope>
</reference>
<reference key="3">
    <citation type="journal article" date="2004" name="Genome Res.">
        <title>The status, quality, and expansion of the NIH full-length cDNA project: the Mammalian Gene Collection (MGC).</title>
        <authorList>
            <consortium name="The MGC Project Team"/>
        </authorList>
    </citation>
    <scope>NUCLEOTIDE SEQUENCE [LARGE SCALE MRNA]</scope>
    <source>
        <tissue>Testis</tissue>
    </source>
</reference>
<reference key="4">
    <citation type="journal article" date="2007" name="J. Cell Biol.">
        <title>Pericentric heterochromatin reprogramming by new histone variants during mouse spermiogenesis.</title>
        <authorList>
            <person name="Govin J."/>
            <person name="Escoffier E."/>
            <person name="Rousseaux S."/>
            <person name="Kuhn L."/>
            <person name="Ferro M."/>
            <person name="Thevenon J."/>
            <person name="Catena R."/>
            <person name="Davidson I."/>
            <person name="Garin J."/>
            <person name="Khochbin S."/>
            <person name="Caron C."/>
        </authorList>
    </citation>
    <scope>SUBCELLULAR LOCATION</scope>
    <scope>TISSUE SPECIFICITY</scope>
    <scope>DEVELOPMENTAL STAGE</scope>
</reference>
<reference key="5">
    <citation type="journal article" date="2008" name="J. Reprod. Dev.">
        <title>Testis-specific histone variants H2AL1/2 rapidly disappear from paternal heterochromatin after fertilization.</title>
        <authorList>
            <person name="Wu F."/>
            <person name="Caron C."/>
            <person name="De Robertis C."/>
            <person name="Khochbin S."/>
            <person name="Rousseaux S."/>
        </authorList>
    </citation>
    <scope>DEVELOPMENTAL STAGE</scope>
</reference>
<organism>
    <name type="scientific">Mus musculus</name>
    <name type="common">Mouse</name>
    <dbReference type="NCBI Taxonomy" id="10090"/>
    <lineage>
        <taxon>Eukaryota</taxon>
        <taxon>Metazoa</taxon>
        <taxon>Chordata</taxon>
        <taxon>Craniata</taxon>
        <taxon>Vertebrata</taxon>
        <taxon>Euteleostomi</taxon>
        <taxon>Mammalia</taxon>
        <taxon>Eutheria</taxon>
        <taxon>Euarchontoglires</taxon>
        <taxon>Glires</taxon>
        <taxon>Rodentia</taxon>
        <taxon>Myomorpha</taxon>
        <taxon>Muroidea</taxon>
        <taxon>Muridae</taxon>
        <taxon>Murinae</taxon>
        <taxon>Mus</taxon>
        <taxon>Mus</taxon>
    </lineage>
</organism>
<protein>
    <recommendedName>
        <fullName evidence="4">Histone H2A-like 1</fullName>
        <shortName evidence="3">H2A.L.1</shortName>
        <shortName evidence="3">H2AL1</shortName>
        <shortName evidence="3">Histone H2Alike 1</shortName>
    </recommendedName>
</protein>
<sequence length="105" mass="12122">MAKKMQRRRRQKRTRSQRGELPFSLVDRFLREEFHSSRLSSSALSFLTSVLEYLTSNILELAGEVAQTTGRKRIAPEDVRLVVQNNEQLRQLFKPGGTSVNEDDN</sequence>
<feature type="chain" id="PRO_0000440627" description="Histone H2A-like 1">
    <location>
        <begin position="1"/>
        <end position="105"/>
    </location>
</feature>
<gene>
    <name evidence="12" type="primary">H2al1a</name>
</gene>
<gene>
    <name evidence="10" type="primary">H2al1c</name>
</gene>
<gene>
    <name evidence="8" type="primary">H2al1d</name>
</gene>
<gene>
    <name evidence="6" type="primary">H2al1f</name>
</gene>
<gene>
    <name evidence="9" type="primary">H2al1g</name>
</gene>
<gene>
    <name evidence="11" type="primary">H2al1h</name>
</gene>
<gene>
    <name evidence="7" type="primary">H2al1i</name>
</gene>